<name>ARC3B_XENLA</name>
<gene>
    <name type="primary">arpc3-b</name>
    <name evidence="4" type="ORF">XELAEV_18007840mg</name>
</gene>
<feature type="chain" id="PRO_0000445562" description="Actin-related protein 2/3 complex subunit 3-B">
    <location>
        <begin position="1"/>
        <end position="178"/>
    </location>
</feature>
<protein>
    <recommendedName>
        <fullName>Actin-related protein 2/3 complex subunit 3-B</fullName>
    </recommendedName>
</protein>
<accession>Q7T0U5</accession>
<proteinExistence type="evidence at transcript level"/>
<organism>
    <name type="scientific">Xenopus laevis</name>
    <name type="common">African clawed frog</name>
    <dbReference type="NCBI Taxonomy" id="8355"/>
    <lineage>
        <taxon>Eukaryota</taxon>
        <taxon>Metazoa</taxon>
        <taxon>Chordata</taxon>
        <taxon>Craniata</taxon>
        <taxon>Vertebrata</taxon>
        <taxon>Euteleostomi</taxon>
        <taxon>Amphibia</taxon>
        <taxon>Batrachia</taxon>
        <taxon>Anura</taxon>
        <taxon>Pipoidea</taxon>
        <taxon>Pipidae</taxon>
        <taxon>Xenopodinae</taxon>
        <taxon>Xenopus</taxon>
        <taxon>Xenopus</taxon>
    </lineage>
</organism>
<comment type="function">
    <text evidence="1 2">Component of the Arp2/3 complex, a multiprotein complex that mediates actin polymerization upon stimulation by nucleation-promoting factor (NPF). The Arp2/3 complex mediates the formation of branched actin networks in the cytoplasm, providing the force for cell motility. In addition to its role in the cytoplasmic cytoskeleton, the Arp2/3 complex also promotes actin polymerization in the nucleus, thereby regulating gene transcription and repair of damaged DNA (By similarity). The Arp2/3 complex promotes homologous recombination (HR) repair in response to DNA damage by promoting nuclear actin polymerization, leading to drive motility of double-strand breaks (DSBs) (By similarity).</text>
</comment>
<comment type="subunit">
    <text evidence="1">Component of the Arp2/3 complex composed of actr2/arp2, actr3/arp3, arpc1 (arpc1a or arpc1b), arpc2, arpc3, arpc4 and arpc5.</text>
</comment>
<comment type="subcellular location">
    <subcellularLocation>
        <location evidence="1">Cytoplasm</location>
        <location evidence="1">Cytoskeleton</location>
    </subcellularLocation>
    <subcellularLocation>
        <location evidence="1">Cell projection</location>
    </subcellularLocation>
    <subcellularLocation>
        <location evidence="1">Nucleus</location>
    </subcellularLocation>
</comment>
<comment type="similarity">
    <text evidence="3">Belongs to the ARPC3 family.</text>
</comment>
<keyword id="KW-0009">Actin-binding</keyword>
<keyword id="KW-0966">Cell projection</keyword>
<keyword id="KW-0963">Cytoplasm</keyword>
<keyword id="KW-0206">Cytoskeleton</keyword>
<keyword id="KW-0539">Nucleus</keyword>
<keyword id="KW-1185">Reference proteome</keyword>
<sequence length="178" mass="20598">MPAYHSILMESDTKLIGNMAMLPIRSQFKGPAPRETKDTDIIDEAIYYFKANVFFKNYEIKNEADRTLIYITLYISECLKKLQKCNSKGQGEKEMYTLGITNFPIPGEPGFPLNAMYVKPSNKQEDEVMRAYLQQLRQETGLRLCDKVFDPQTDKPSKWWICFVKKQFMNKSLSGPGQ</sequence>
<evidence type="ECO:0000250" key="1">
    <source>
        <dbReference type="UniProtKB" id="A1DPK7"/>
    </source>
</evidence>
<evidence type="ECO:0000250" key="2">
    <source>
        <dbReference type="UniProtKB" id="O15145"/>
    </source>
</evidence>
<evidence type="ECO:0000305" key="3"/>
<evidence type="ECO:0000312" key="4">
    <source>
        <dbReference type="EMBL" id="OCU02081.1"/>
    </source>
</evidence>
<reference key="1">
    <citation type="journal article" date="2016" name="Nature">
        <title>Genome evolution in the allotetraploid frog Xenopus laevis.</title>
        <authorList>
            <person name="Session A.M."/>
            <person name="Uno Y."/>
            <person name="Kwon T."/>
            <person name="Chapman J.A."/>
            <person name="Toyoda A."/>
            <person name="Takahashi S."/>
            <person name="Fukui A."/>
            <person name="Hikosaka A."/>
            <person name="Suzuki A."/>
            <person name="Kondo M."/>
            <person name="van Heeringen S.J."/>
            <person name="Quigley I."/>
            <person name="Heinz S."/>
            <person name="Ogino H."/>
            <person name="Ochi H."/>
            <person name="Hellsten U."/>
            <person name="Lyons J.B."/>
            <person name="Simakov O."/>
            <person name="Putnam N."/>
            <person name="Stites J."/>
            <person name="Kuroki Y."/>
            <person name="Tanaka T."/>
            <person name="Michiue T."/>
            <person name="Watanabe M."/>
            <person name="Bogdanovic O."/>
            <person name="Lister R."/>
            <person name="Georgiou G."/>
            <person name="Paranjpe S.S."/>
            <person name="van Kruijsbergen I."/>
            <person name="Shu S."/>
            <person name="Carlson J."/>
            <person name="Kinoshita T."/>
            <person name="Ohta Y."/>
            <person name="Mawaribuchi S."/>
            <person name="Jenkins J."/>
            <person name="Grimwood J."/>
            <person name="Schmutz J."/>
            <person name="Mitros T."/>
            <person name="Mozaffari S.V."/>
            <person name="Suzuki Y."/>
            <person name="Haramoto Y."/>
            <person name="Yamamoto T.S."/>
            <person name="Takagi C."/>
            <person name="Heald R."/>
            <person name="Miller K."/>
            <person name="Haudenschild C."/>
            <person name="Kitzman J."/>
            <person name="Nakayama T."/>
            <person name="Izutsu Y."/>
            <person name="Robert J."/>
            <person name="Fortriede J."/>
            <person name="Burns K."/>
            <person name="Lotay V."/>
            <person name="Karimi K."/>
            <person name="Yasuoka Y."/>
            <person name="Dichmann D.S."/>
            <person name="Flajnik M.F."/>
            <person name="Houston D.W."/>
            <person name="Shendure J."/>
            <person name="DuPasquier L."/>
            <person name="Vize P.D."/>
            <person name="Zorn A.M."/>
            <person name="Ito M."/>
            <person name="Marcotte E.M."/>
            <person name="Wallingford J.B."/>
            <person name="Ito Y."/>
            <person name="Asashima M."/>
            <person name="Ueno N."/>
            <person name="Matsuda Y."/>
            <person name="Veenstra G.J."/>
            <person name="Fujiyama A."/>
            <person name="Harland R.M."/>
            <person name="Taira M."/>
            <person name="Rokhsar D.S."/>
        </authorList>
    </citation>
    <scope>NUCLEOTIDE SEQUENCE [LARGE SCALE GENOMIC DNA]</scope>
    <source>
        <strain>J</strain>
    </source>
</reference>
<reference key="2">
    <citation type="submission" date="2003-08" db="EMBL/GenBank/DDBJ databases">
        <authorList>
            <consortium name="NIH - Xenopus Gene Collection (XGC) project"/>
        </authorList>
    </citation>
    <scope>NUCLEOTIDE SEQUENCE [LARGE SCALE MRNA]</scope>
    <source>
        <tissue>Spleen</tissue>
    </source>
</reference>
<dbReference type="EMBL" id="CM004466">
    <property type="protein sequence ID" value="OCU02081.1"/>
    <property type="molecule type" value="Genomic_DNA"/>
</dbReference>
<dbReference type="EMBL" id="BC056034">
    <property type="protein sequence ID" value="AAH56034.1"/>
    <property type="molecule type" value="mRNA"/>
</dbReference>
<dbReference type="RefSeq" id="NP_001080054.1">
    <property type="nucleotide sequence ID" value="NM_001086585.1"/>
</dbReference>
<dbReference type="SMR" id="Q7T0U5"/>
<dbReference type="IntAct" id="Q7T0U5">
    <property type="interactions" value="1"/>
</dbReference>
<dbReference type="MINT" id="Q7T0U5"/>
<dbReference type="STRING" id="8355.Q7T0U5"/>
<dbReference type="PaxDb" id="8355-Q7T0U5"/>
<dbReference type="DNASU" id="379746"/>
<dbReference type="GeneID" id="379746"/>
<dbReference type="KEGG" id="xla:379746"/>
<dbReference type="AGR" id="Xenbase:XB-GENE-494119"/>
<dbReference type="CTD" id="379746"/>
<dbReference type="Xenbase" id="XB-GENE-494119">
    <property type="gene designation" value="arpc3.L"/>
</dbReference>
<dbReference type="OMA" id="SEIEEFH"/>
<dbReference type="OrthoDB" id="200404at2759"/>
<dbReference type="Proteomes" id="UP000186698">
    <property type="component" value="Chromosome 1L"/>
</dbReference>
<dbReference type="Proteomes" id="UP000694892">
    <property type="component" value="Chromosome 1L"/>
</dbReference>
<dbReference type="Bgee" id="379746">
    <property type="expression patterns" value="Expressed in spleen and 19 other cell types or tissues"/>
</dbReference>
<dbReference type="GO" id="GO:0005885">
    <property type="term" value="C:Arp2/3 protein complex"/>
    <property type="evidence" value="ECO:0000250"/>
    <property type="project" value="UniProtKB"/>
</dbReference>
<dbReference type="GO" id="GO:0042995">
    <property type="term" value="C:cell projection"/>
    <property type="evidence" value="ECO:0007669"/>
    <property type="project" value="UniProtKB-SubCell"/>
</dbReference>
<dbReference type="GO" id="GO:0005737">
    <property type="term" value="C:cytoplasm"/>
    <property type="evidence" value="ECO:0007669"/>
    <property type="project" value="UniProtKB-KW"/>
</dbReference>
<dbReference type="GO" id="GO:0005634">
    <property type="term" value="C:nucleus"/>
    <property type="evidence" value="ECO:0000250"/>
    <property type="project" value="UniProtKB"/>
</dbReference>
<dbReference type="GO" id="GO:0035861">
    <property type="term" value="C:site of double-strand break"/>
    <property type="evidence" value="ECO:0000250"/>
    <property type="project" value="UniProtKB"/>
</dbReference>
<dbReference type="GO" id="GO:0003779">
    <property type="term" value="F:actin binding"/>
    <property type="evidence" value="ECO:0007669"/>
    <property type="project" value="UniProtKB-KW"/>
</dbReference>
<dbReference type="GO" id="GO:0034314">
    <property type="term" value="P:Arp2/3 complex-mediated actin nucleation"/>
    <property type="evidence" value="ECO:0000318"/>
    <property type="project" value="GO_Central"/>
</dbReference>
<dbReference type="GO" id="GO:0030833">
    <property type="term" value="P:regulation of actin filament polymerization"/>
    <property type="evidence" value="ECO:0007669"/>
    <property type="project" value="InterPro"/>
</dbReference>
<dbReference type="FunFam" id="1.10.1760.10:FF:000001">
    <property type="entry name" value="Actin-related protein 2/3 complex subunit 3"/>
    <property type="match status" value="1"/>
</dbReference>
<dbReference type="Gene3D" id="1.10.1760.10">
    <property type="entry name" value="Actin-related protein 2/3 complex subunit 3"/>
    <property type="match status" value="1"/>
</dbReference>
<dbReference type="InterPro" id="IPR007204">
    <property type="entry name" value="ARPC3"/>
</dbReference>
<dbReference type="InterPro" id="IPR036753">
    <property type="entry name" value="ARPC3_sf"/>
</dbReference>
<dbReference type="PANTHER" id="PTHR12391">
    <property type="entry name" value="ARP2/3 COMPLEX 21 KD SUBUNIT"/>
    <property type="match status" value="1"/>
</dbReference>
<dbReference type="Pfam" id="PF04062">
    <property type="entry name" value="P21-Arc"/>
    <property type="match status" value="1"/>
</dbReference>
<dbReference type="PIRSF" id="PIRSF016315">
    <property type="entry name" value="ARP2/3_P21-Arc"/>
    <property type="match status" value="1"/>
</dbReference>
<dbReference type="SUPFAM" id="SSF69060">
    <property type="entry name" value="Arp2/3 complex 21 kDa subunit ARPC3"/>
    <property type="match status" value="1"/>
</dbReference>